<name>COX2_BACSU</name>
<proteinExistence type="inferred from homology"/>
<gene>
    <name type="primary">ctaC</name>
    <name type="ordered locus">BSU14890</name>
</gene>
<feature type="signal peptide" evidence="2">
    <location>
        <begin position="1"/>
        <end position="20"/>
    </location>
</feature>
<feature type="chain" id="PRO_0000006051" description="Cytochrome c oxidase subunit 2">
    <location>
        <begin position="21"/>
        <end position="356"/>
    </location>
</feature>
<feature type="topological domain" description="Extracellular" evidence="1">
    <location>
        <begin position="21"/>
        <end position="47"/>
    </location>
</feature>
<feature type="transmembrane region" description="Helical" evidence="1">
    <location>
        <begin position="48"/>
        <end position="66"/>
    </location>
</feature>
<feature type="topological domain" description="Cytoplasmic" evidence="1">
    <location>
        <begin position="67"/>
        <end position="87"/>
    </location>
</feature>
<feature type="transmembrane region" description="Helical" evidence="1">
    <location>
        <begin position="88"/>
        <end position="106"/>
    </location>
</feature>
<feature type="topological domain" description="Extracellular" evidence="1">
    <location>
        <begin position="107"/>
        <end position="356"/>
    </location>
</feature>
<feature type="domain" description="Cytochrome c" evidence="3">
    <location>
        <begin position="258"/>
        <end position="356"/>
    </location>
</feature>
<feature type="region of interest" description="Cytochrome c oxidase subunit II">
    <location>
        <begin position="21"/>
        <end position="257"/>
    </location>
</feature>
<feature type="binding site" evidence="4">
    <location>
        <position position="176"/>
    </location>
    <ligand>
        <name>Cu cation</name>
        <dbReference type="ChEBI" id="CHEBI:23378"/>
        <label>A</label>
    </ligand>
</feature>
<feature type="binding site" evidence="4">
    <location>
        <position position="217"/>
    </location>
    <ligand>
        <name>Cu cation</name>
        <dbReference type="ChEBI" id="CHEBI:23378"/>
        <label>A</label>
    </ligand>
</feature>
<feature type="binding site" evidence="4">
    <location>
        <position position="221"/>
    </location>
    <ligand>
        <name>Cu cation</name>
        <dbReference type="ChEBI" id="CHEBI:23378"/>
        <label>A</label>
    </ligand>
</feature>
<feature type="binding site" evidence="4">
    <location>
        <position position="225"/>
    </location>
    <ligand>
        <name>Cu cation</name>
        <dbReference type="ChEBI" id="CHEBI:23378"/>
        <label>A</label>
    </ligand>
</feature>
<feature type="binding site" description="covalent" evidence="4">
    <location>
        <position position="271"/>
    </location>
    <ligand>
        <name>heme c</name>
        <dbReference type="ChEBI" id="CHEBI:61717"/>
    </ligand>
</feature>
<feature type="binding site" description="covalent" evidence="4">
    <location>
        <position position="274"/>
    </location>
    <ligand>
        <name>heme c</name>
        <dbReference type="ChEBI" id="CHEBI:61717"/>
    </ligand>
</feature>
<feature type="binding site" description="axial binding residue" evidence="4">
    <location>
        <position position="275"/>
    </location>
    <ligand>
        <name>heme c</name>
        <dbReference type="ChEBI" id="CHEBI:61717"/>
    </ligand>
    <ligandPart>
        <name>Fe</name>
        <dbReference type="ChEBI" id="CHEBI:18248"/>
    </ligandPart>
</feature>
<feature type="binding site" description="axial binding residue" evidence="4">
    <location>
        <position position="329"/>
    </location>
    <ligand>
        <name>heme c</name>
        <dbReference type="ChEBI" id="CHEBI:61717"/>
    </ligand>
    <ligandPart>
        <name>Fe</name>
        <dbReference type="ChEBI" id="CHEBI:18248"/>
    </ligandPart>
</feature>
<feature type="lipid moiety-binding region" description="N-palmitoyl cysteine" evidence="2">
    <location>
        <position position="21"/>
    </location>
</feature>
<feature type="lipid moiety-binding region" description="S-diacylglycerol cysteine" evidence="2">
    <location>
        <position position="21"/>
    </location>
</feature>
<feature type="sequence conflict" description="In Ref. 1; CAA38076." evidence="4" ref="1">
    <original>D</original>
    <variation>H</variation>
    <location>
        <position position="257"/>
    </location>
</feature>
<accession>P24011</accession>
<accession>O34404</accession>
<reference key="1">
    <citation type="journal article" date="1991" name="Eur. J. Biochem.">
        <title>The Bacillus subtilis cytochrome-c oxidase. Variations on a conserved protein theme.</title>
        <authorList>
            <person name="Saraste M."/>
            <person name="Metso T."/>
            <person name="Nakari T."/>
            <person name="Jalli T."/>
            <person name="Lauraeus M."/>
            <person name="van der Oost J."/>
        </authorList>
    </citation>
    <scope>NUCLEOTIDE SEQUENCE [GENOMIC DNA]</scope>
    <source>
        <strain>168</strain>
    </source>
</reference>
<reference key="2">
    <citation type="submission" date="1997-08" db="EMBL/GenBank/DDBJ databases">
        <title>Bacillus subtilis chromosomal region downstream nprE.</title>
        <authorList>
            <person name="Bertero M."/>
            <person name="Presecan E."/>
            <person name="Glaser P."/>
            <person name="Richou A."/>
            <person name="Danchin A."/>
        </authorList>
    </citation>
    <scope>NUCLEOTIDE SEQUENCE [GENOMIC DNA]</scope>
    <source>
        <strain>168</strain>
    </source>
</reference>
<reference key="3">
    <citation type="journal article" date="1997" name="Nature">
        <title>The complete genome sequence of the Gram-positive bacterium Bacillus subtilis.</title>
        <authorList>
            <person name="Kunst F."/>
            <person name="Ogasawara N."/>
            <person name="Moszer I."/>
            <person name="Albertini A.M."/>
            <person name="Alloni G."/>
            <person name="Azevedo V."/>
            <person name="Bertero M.G."/>
            <person name="Bessieres P."/>
            <person name="Bolotin A."/>
            <person name="Borchert S."/>
            <person name="Borriss R."/>
            <person name="Boursier L."/>
            <person name="Brans A."/>
            <person name="Braun M."/>
            <person name="Brignell S.C."/>
            <person name="Bron S."/>
            <person name="Brouillet S."/>
            <person name="Bruschi C.V."/>
            <person name="Caldwell B."/>
            <person name="Capuano V."/>
            <person name="Carter N.M."/>
            <person name="Choi S.-K."/>
            <person name="Codani J.-J."/>
            <person name="Connerton I.F."/>
            <person name="Cummings N.J."/>
            <person name="Daniel R.A."/>
            <person name="Denizot F."/>
            <person name="Devine K.M."/>
            <person name="Duesterhoeft A."/>
            <person name="Ehrlich S.D."/>
            <person name="Emmerson P.T."/>
            <person name="Entian K.-D."/>
            <person name="Errington J."/>
            <person name="Fabret C."/>
            <person name="Ferrari E."/>
            <person name="Foulger D."/>
            <person name="Fritz C."/>
            <person name="Fujita M."/>
            <person name="Fujita Y."/>
            <person name="Fuma S."/>
            <person name="Galizzi A."/>
            <person name="Galleron N."/>
            <person name="Ghim S.-Y."/>
            <person name="Glaser P."/>
            <person name="Goffeau A."/>
            <person name="Golightly E.J."/>
            <person name="Grandi G."/>
            <person name="Guiseppi G."/>
            <person name="Guy B.J."/>
            <person name="Haga K."/>
            <person name="Haiech J."/>
            <person name="Harwood C.R."/>
            <person name="Henaut A."/>
            <person name="Hilbert H."/>
            <person name="Holsappel S."/>
            <person name="Hosono S."/>
            <person name="Hullo M.-F."/>
            <person name="Itaya M."/>
            <person name="Jones L.-M."/>
            <person name="Joris B."/>
            <person name="Karamata D."/>
            <person name="Kasahara Y."/>
            <person name="Klaerr-Blanchard M."/>
            <person name="Klein C."/>
            <person name="Kobayashi Y."/>
            <person name="Koetter P."/>
            <person name="Koningstein G."/>
            <person name="Krogh S."/>
            <person name="Kumano M."/>
            <person name="Kurita K."/>
            <person name="Lapidus A."/>
            <person name="Lardinois S."/>
            <person name="Lauber J."/>
            <person name="Lazarevic V."/>
            <person name="Lee S.-M."/>
            <person name="Levine A."/>
            <person name="Liu H."/>
            <person name="Masuda S."/>
            <person name="Mauel C."/>
            <person name="Medigue C."/>
            <person name="Medina N."/>
            <person name="Mellado R.P."/>
            <person name="Mizuno M."/>
            <person name="Moestl D."/>
            <person name="Nakai S."/>
            <person name="Noback M."/>
            <person name="Noone D."/>
            <person name="O'Reilly M."/>
            <person name="Ogawa K."/>
            <person name="Ogiwara A."/>
            <person name="Oudega B."/>
            <person name="Park S.-H."/>
            <person name="Parro V."/>
            <person name="Pohl T.M."/>
            <person name="Portetelle D."/>
            <person name="Porwollik S."/>
            <person name="Prescott A.M."/>
            <person name="Presecan E."/>
            <person name="Pujic P."/>
            <person name="Purnelle B."/>
            <person name="Rapoport G."/>
            <person name="Rey M."/>
            <person name="Reynolds S."/>
            <person name="Rieger M."/>
            <person name="Rivolta C."/>
            <person name="Rocha E."/>
            <person name="Roche B."/>
            <person name="Rose M."/>
            <person name="Sadaie Y."/>
            <person name="Sato T."/>
            <person name="Scanlan E."/>
            <person name="Schleich S."/>
            <person name="Schroeter R."/>
            <person name="Scoffone F."/>
            <person name="Sekiguchi J."/>
            <person name="Sekowska A."/>
            <person name="Seror S.J."/>
            <person name="Serror P."/>
            <person name="Shin B.-S."/>
            <person name="Soldo B."/>
            <person name="Sorokin A."/>
            <person name="Tacconi E."/>
            <person name="Takagi T."/>
            <person name="Takahashi H."/>
            <person name="Takemaru K."/>
            <person name="Takeuchi M."/>
            <person name="Tamakoshi A."/>
            <person name="Tanaka T."/>
            <person name="Terpstra P."/>
            <person name="Tognoni A."/>
            <person name="Tosato V."/>
            <person name="Uchiyama S."/>
            <person name="Vandenbol M."/>
            <person name="Vannier F."/>
            <person name="Vassarotti A."/>
            <person name="Viari A."/>
            <person name="Wambutt R."/>
            <person name="Wedler E."/>
            <person name="Wedler H."/>
            <person name="Weitzenegger T."/>
            <person name="Winters P."/>
            <person name="Wipat A."/>
            <person name="Yamamoto H."/>
            <person name="Yamane K."/>
            <person name="Yasumoto K."/>
            <person name="Yata K."/>
            <person name="Yoshida K."/>
            <person name="Yoshikawa H.-F."/>
            <person name="Zumstein E."/>
            <person name="Yoshikawa H."/>
            <person name="Danchin A."/>
        </authorList>
    </citation>
    <scope>NUCLEOTIDE SEQUENCE [LARGE SCALE GENOMIC DNA]</scope>
    <source>
        <strain>168</strain>
    </source>
</reference>
<sequence>MVKHWRLILLLALVPLLLSGCGKPFLSTLKPAGEVADKQYDLTVLSTLIMVVVVAVVSVIFFYVIVRFRRSRVGENTIPKQVEGNKFLEITWTVIPILLLIILVIPVVLYTLELADTSPMDKKGRKAEDALVVNVRANLYWWEFEYPDYGIITSQELIVPTDQRVYFNLKASDVKHSFWIPSVGGKLDTNTDNENKFFLTFDSKRSKEAGDMFFGKCAELCGPSHALMDFKVKTMSAKEFQGWTKEMKNYKSTAESDLAKQGEELFKEKNCLSCHAVEPNDKRAEAARTAPNLATFGERTKVAGVKEANKENVKAWLKDPDSIKPGNKMTGTYPKLSDSETNALYEYLKGLKAESK</sequence>
<organism>
    <name type="scientific">Bacillus subtilis (strain 168)</name>
    <dbReference type="NCBI Taxonomy" id="224308"/>
    <lineage>
        <taxon>Bacteria</taxon>
        <taxon>Bacillati</taxon>
        <taxon>Bacillota</taxon>
        <taxon>Bacilli</taxon>
        <taxon>Bacillales</taxon>
        <taxon>Bacillaceae</taxon>
        <taxon>Bacillus</taxon>
    </lineage>
</organism>
<keyword id="KW-1003">Cell membrane</keyword>
<keyword id="KW-0186">Copper</keyword>
<keyword id="KW-0249">Electron transport</keyword>
<keyword id="KW-0349">Heme</keyword>
<keyword id="KW-0408">Iron</keyword>
<keyword id="KW-0449">Lipoprotein</keyword>
<keyword id="KW-0472">Membrane</keyword>
<keyword id="KW-0479">Metal-binding</keyword>
<keyword id="KW-0564">Palmitate</keyword>
<keyword id="KW-1185">Reference proteome</keyword>
<keyword id="KW-0679">Respiratory chain</keyword>
<keyword id="KW-0732">Signal</keyword>
<keyword id="KW-1278">Translocase</keyword>
<keyword id="KW-0812">Transmembrane</keyword>
<keyword id="KW-1133">Transmembrane helix</keyword>
<keyword id="KW-0813">Transport</keyword>
<protein>
    <recommendedName>
        <fullName>Cytochrome c oxidase subunit 2</fullName>
        <ecNumber>7.1.1.9</ecNumber>
    </recommendedName>
    <alternativeName>
        <fullName>Caa-3605 subunit 2</fullName>
    </alternativeName>
    <alternativeName>
        <fullName>Cytochrome aa3 subunit 2</fullName>
    </alternativeName>
    <alternativeName>
        <fullName>Cytochrome c oxidase polypeptide II</fullName>
    </alternativeName>
    <alternativeName>
        <fullName>Oxidase aa(3) subunit 2</fullName>
    </alternativeName>
</protein>
<dbReference type="EC" id="7.1.1.9"/>
<dbReference type="EMBL" id="X54140">
    <property type="protein sequence ID" value="CAA38076.1"/>
    <property type="molecule type" value="Genomic_DNA"/>
</dbReference>
<dbReference type="EMBL" id="Z98682">
    <property type="protein sequence ID" value="CAB11342.1"/>
    <property type="molecule type" value="Genomic_DNA"/>
</dbReference>
<dbReference type="EMBL" id="AL009126">
    <property type="protein sequence ID" value="CAB13362.1"/>
    <property type="molecule type" value="Genomic_DNA"/>
</dbReference>
<dbReference type="PIR" id="S14396">
    <property type="entry name" value="S14396"/>
</dbReference>
<dbReference type="RefSeq" id="NP_389372.1">
    <property type="nucleotide sequence ID" value="NC_000964.3"/>
</dbReference>
<dbReference type="SMR" id="P24011"/>
<dbReference type="FunCoup" id="P24011">
    <property type="interactions" value="167"/>
</dbReference>
<dbReference type="STRING" id="224308.BSU14890"/>
<dbReference type="TCDB" id="3.D.4.4.1">
    <property type="family name" value="the proton-translocating cytochrome oxidase (cox) superfamily"/>
</dbReference>
<dbReference type="PaxDb" id="224308-BSU14890"/>
<dbReference type="DNASU" id="936789"/>
<dbReference type="EnsemblBacteria" id="CAB13362">
    <property type="protein sequence ID" value="CAB13362"/>
    <property type="gene ID" value="BSU_14890"/>
</dbReference>
<dbReference type="GeneID" id="936789"/>
<dbReference type="KEGG" id="bsu:BSU14890"/>
<dbReference type="PATRIC" id="fig|224308.179.peg.1624"/>
<dbReference type="eggNOG" id="COG1622">
    <property type="taxonomic scope" value="Bacteria"/>
</dbReference>
<dbReference type="eggNOG" id="COG2010">
    <property type="taxonomic scope" value="Bacteria"/>
</dbReference>
<dbReference type="InParanoid" id="P24011"/>
<dbReference type="OrthoDB" id="9781261at2"/>
<dbReference type="PhylomeDB" id="P24011"/>
<dbReference type="BioCyc" id="BSUB:BSU14890-MONOMER"/>
<dbReference type="BioCyc" id="MetaCyc:BSU14890-MONOMER"/>
<dbReference type="SABIO-RK" id="P24011"/>
<dbReference type="Proteomes" id="UP000001570">
    <property type="component" value="Chromosome"/>
</dbReference>
<dbReference type="GO" id="GO:0005886">
    <property type="term" value="C:plasma membrane"/>
    <property type="evidence" value="ECO:0007669"/>
    <property type="project" value="UniProtKB-SubCell"/>
</dbReference>
<dbReference type="GO" id="GO:0005507">
    <property type="term" value="F:copper ion binding"/>
    <property type="evidence" value="ECO:0007669"/>
    <property type="project" value="InterPro"/>
</dbReference>
<dbReference type="GO" id="GO:0004129">
    <property type="term" value="F:cytochrome-c oxidase activity"/>
    <property type="evidence" value="ECO:0007669"/>
    <property type="project" value="UniProtKB-EC"/>
</dbReference>
<dbReference type="GO" id="GO:0020037">
    <property type="term" value="F:heme binding"/>
    <property type="evidence" value="ECO:0007669"/>
    <property type="project" value="InterPro"/>
</dbReference>
<dbReference type="GO" id="GO:0042773">
    <property type="term" value="P:ATP synthesis coupled electron transport"/>
    <property type="evidence" value="ECO:0000318"/>
    <property type="project" value="GO_Central"/>
</dbReference>
<dbReference type="CDD" id="cd04213">
    <property type="entry name" value="CuRO_CcO_Caa3_II"/>
    <property type="match status" value="1"/>
</dbReference>
<dbReference type="FunFam" id="2.60.40.420:FF:000042">
    <property type="entry name" value="Cytochrome c oxidase subunit 2"/>
    <property type="match status" value="1"/>
</dbReference>
<dbReference type="Gene3D" id="1.10.287.90">
    <property type="match status" value="1"/>
</dbReference>
<dbReference type="Gene3D" id="2.60.40.420">
    <property type="entry name" value="Cupredoxins - blue copper proteins"/>
    <property type="match status" value="1"/>
</dbReference>
<dbReference type="InterPro" id="IPR045187">
    <property type="entry name" value="CcO_II"/>
</dbReference>
<dbReference type="InterPro" id="IPR002429">
    <property type="entry name" value="CcO_II-like_C"/>
</dbReference>
<dbReference type="InterPro" id="IPR001505">
    <property type="entry name" value="Copper_CuA"/>
</dbReference>
<dbReference type="InterPro" id="IPR008972">
    <property type="entry name" value="Cupredoxin"/>
</dbReference>
<dbReference type="InterPro" id="IPR034236">
    <property type="entry name" value="CuRO_CcO_Caa3_II"/>
</dbReference>
<dbReference type="InterPro" id="IPR009056">
    <property type="entry name" value="Cyt_c-like_dom"/>
</dbReference>
<dbReference type="InterPro" id="IPR036909">
    <property type="entry name" value="Cyt_c-like_dom_sf"/>
</dbReference>
<dbReference type="InterPro" id="IPR014222">
    <property type="entry name" value="Cyt_c_oxidase_su2"/>
</dbReference>
<dbReference type="InterPro" id="IPR011759">
    <property type="entry name" value="Cyt_c_oxidase_su2_TM_dom"/>
</dbReference>
<dbReference type="InterPro" id="IPR036257">
    <property type="entry name" value="Cyt_c_oxidase_su2_TM_sf"/>
</dbReference>
<dbReference type="NCBIfam" id="TIGR02866">
    <property type="entry name" value="CoxB"/>
    <property type="match status" value="1"/>
</dbReference>
<dbReference type="PANTHER" id="PTHR22888:SF10">
    <property type="entry name" value="CYTOCHROME C OXIDASE SUBUNIT 2"/>
    <property type="match status" value="1"/>
</dbReference>
<dbReference type="PANTHER" id="PTHR22888">
    <property type="entry name" value="CYTOCHROME C OXIDASE, SUBUNIT II"/>
    <property type="match status" value="1"/>
</dbReference>
<dbReference type="Pfam" id="PF00116">
    <property type="entry name" value="COX2"/>
    <property type="match status" value="1"/>
</dbReference>
<dbReference type="Pfam" id="PF02790">
    <property type="entry name" value="COX2_TM"/>
    <property type="match status" value="1"/>
</dbReference>
<dbReference type="Pfam" id="PF00034">
    <property type="entry name" value="Cytochrom_C"/>
    <property type="match status" value="1"/>
</dbReference>
<dbReference type="PRINTS" id="PR01166">
    <property type="entry name" value="CYCOXIDASEII"/>
</dbReference>
<dbReference type="SUPFAM" id="SSF49503">
    <property type="entry name" value="Cupredoxins"/>
    <property type="match status" value="1"/>
</dbReference>
<dbReference type="SUPFAM" id="SSF46626">
    <property type="entry name" value="Cytochrome c"/>
    <property type="match status" value="1"/>
</dbReference>
<dbReference type="SUPFAM" id="SSF81464">
    <property type="entry name" value="Cytochrome c oxidase subunit II-like, transmembrane region"/>
    <property type="match status" value="1"/>
</dbReference>
<dbReference type="PROSITE" id="PS00078">
    <property type="entry name" value="COX2"/>
    <property type="match status" value="1"/>
</dbReference>
<dbReference type="PROSITE" id="PS50857">
    <property type="entry name" value="COX2_CUA"/>
    <property type="match status" value="1"/>
</dbReference>
<dbReference type="PROSITE" id="PS50999">
    <property type="entry name" value="COX2_TM"/>
    <property type="match status" value="1"/>
</dbReference>
<dbReference type="PROSITE" id="PS51007">
    <property type="entry name" value="CYTC"/>
    <property type="match status" value="1"/>
</dbReference>
<dbReference type="PROSITE" id="PS51257">
    <property type="entry name" value="PROKAR_LIPOPROTEIN"/>
    <property type="match status" value="1"/>
</dbReference>
<evidence type="ECO:0000255" key="1"/>
<evidence type="ECO:0000255" key="2">
    <source>
        <dbReference type="PROSITE-ProRule" id="PRU00303"/>
    </source>
</evidence>
<evidence type="ECO:0000255" key="3">
    <source>
        <dbReference type="PROSITE-ProRule" id="PRU00433"/>
    </source>
</evidence>
<evidence type="ECO:0000305" key="4"/>
<comment type="function">
    <text>Subunits I and II form the functional core of the enzyme complex. Electrons originating in cytochrome c are transferred via heme a and Cu(A) to the binuclear center formed by heme a3 and Cu(B).</text>
</comment>
<comment type="catalytic activity">
    <reaction>
        <text>4 Fe(II)-[cytochrome c] + O2 + 8 H(+)(in) = 4 Fe(III)-[cytochrome c] + 2 H2O + 4 H(+)(out)</text>
        <dbReference type="Rhea" id="RHEA:11436"/>
        <dbReference type="Rhea" id="RHEA-COMP:10350"/>
        <dbReference type="Rhea" id="RHEA-COMP:14399"/>
        <dbReference type="ChEBI" id="CHEBI:15377"/>
        <dbReference type="ChEBI" id="CHEBI:15378"/>
        <dbReference type="ChEBI" id="CHEBI:15379"/>
        <dbReference type="ChEBI" id="CHEBI:29033"/>
        <dbReference type="ChEBI" id="CHEBI:29034"/>
        <dbReference type="EC" id="7.1.1.9"/>
    </reaction>
</comment>
<comment type="cofactor">
    <cofactor>
        <name>Cu cation</name>
        <dbReference type="ChEBI" id="CHEBI:23378"/>
    </cofactor>
    <text>Binds a copper A center.</text>
</comment>
<comment type="cofactor">
    <cofactor>
        <name>heme c</name>
        <dbReference type="ChEBI" id="CHEBI:61717"/>
    </cofactor>
</comment>
<comment type="subcellular location">
    <subcellularLocation>
        <location>Cell membrane</location>
        <topology>Multi-pass membrane protein</topology>
    </subcellularLocation>
</comment>
<comment type="similarity">
    <text evidence="4">Belongs to the cytochrome c oxidase subunit 2 family.</text>
</comment>